<protein>
    <recommendedName>
        <fullName>Beta-toxin KAaH1</fullName>
    </recommendedName>
    <alternativeName>
        <fullName>Peptide AaF1CA8</fullName>
    </alternativeName>
</protein>
<dbReference type="EMBL" id="AJ781832">
    <property type="protein sequence ID" value="CAH03778.1"/>
    <property type="molecule type" value="mRNA"/>
</dbReference>
<dbReference type="SMR" id="Q4LCT0"/>
<dbReference type="GO" id="GO:0005576">
    <property type="term" value="C:extracellular region"/>
    <property type="evidence" value="ECO:0000314"/>
    <property type="project" value="UniProtKB"/>
</dbReference>
<dbReference type="GO" id="GO:0008200">
    <property type="term" value="F:ion channel inhibitor activity"/>
    <property type="evidence" value="ECO:0000314"/>
    <property type="project" value="UniProtKB"/>
</dbReference>
<dbReference type="GO" id="GO:0019870">
    <property type="term" value="F:potassium channel inhibitor activity"/>
    <property type="evidence" value="ECO:0000314"/>
    <property type="project" value="UniProtKB"/>
</dbReference>
<dbReference type="GO" id="GO:0019871">
    <property type="term" value="F:sodium channel inhibitor activity"/>
    <property type="evidence" value="ECO:0000314"/>
    <property type="project" value="UniProtKB"/>
</dbReference>
<dbReference type="GO" id="GO:0090729">
    <property type="term" value="F:toxin activity"/>
    <property type="evidence" value="ECO:0007669"/>
    <property type="project" value="UniProtKB-KW"/>
</dbReference>
<dbReference type="CDD" id="cd23106">
    <property type="entry name" value="neurotoxins_LC_scorpion"/>
    <property type="match status" value="1"/>
</dbReference>
<dbReference type="FunFam" id="3.30.30.10:FF:000008">
    <property type="entry name" value="Toxin-like peptide AaF1CA7"/>
    <property type="match status" value="1"/>
</dbReference>
<dbReference type="Gene3D" id="3.30.30.10">
    <property type="entry name" value="Knottin, scorpion toxin-like"/>
    <property type="match status" value="1"/>
</dbReference>
<dbReference type="InterPro" id="IPR044062">
    <property type="entry name" value="LCN-type_CS_alpha_beta_dom"/>
</dbReference>
<dbReference type="InterPro" id="IPR036574">
    <property type="entry name" value="Scorpion_toxin-like_sf"/>
</dbReference>
<dbReference type="InterPro" id="IPR002061">
    <property type="entry name" value="Scorpion_toxinL/defensin"/>
</dbReference>
<dbReference type="Pfam" id="PF00537">
    <property type="entry name" value="Toxin_3"/>
    <property type="match status" value="1"/>
</dbReference>
<dbReference type="SUPFAM" id="SSF57095">
    <property type="entry name" value="Scorpion toxin-like"/>
    <property type="match status" value="1"/>
</dbReference>
<dbReference type="PROSITE" id="PS51863">
    <property type="entry name" value="LCN_CSAB"/>
    <property type="match status" value="1"/>
</dbReference>
<sequence>MMKLMLFSIIVILFSLIGSIHGADVPGNYPLDSSDDTYLCAPLGENPFCIKICRKHGVKYGYCYAFQCWCEYLEDKNVKI</sequence>
<keyword id="KW-0903">Direct protein sequencing</keyword>
<keyword id="KW-1015">Disulfide bond</keyword>
<keyword id="KW-0872">Ion channel impairing toxin</keyword>
<keyword id="KW-0528">Neurotoxin</keyword>
<keyword id="KW-0632">Potassium channel impairing toxin</keyword>
<keyword id="KW-0964">Secreted</keyword>
<keyword id="KW-0732">Signal</keyword>
<keyword id="KW-0800">Toxin</keyword>
<keyword id="KW-1220">Voltage-gated potassium channel impairing toxin</keyword>
<feature type="signal peptide" evidence="2">
    <location>
        <begin position="1"/>
        <end position="22"/>
    </location>
</feature>
<feature type="chain" id="PRO_0000228819" description="Beta-toxin KAaH1">
    <location>
        <begin position="23"/>
        <end position="80"/>
    </location>
</feature>
<feature type="domain" description="LCN-type CS-alpha/beta" evidence="1">
    <location>
        <begin position="25"/>
        <end position="80"/>
    </location>
</feature>
<feature type="disulfide bond" evidence="1">
    <location>
        <begin position="40"/>
        <end position="63"/>
    </location>
</feature>
<feature type="disulfide bond" evidence="1">
    <location>
        <begin position="49"/>
        <end position="68"/>
    </location>
</feature>
<feature type="disulfide bond" evidence="1">
    <location>
        <begin position="53"/>
        <end position="70"/>
    </location>
</feature>
<name>TXA8_ANDAU</name>
<accession>Q4LCT0</accession>
<proteinExistence type="evidence at protein level"/>
<organism>
    <name type="scientific">Androctonus australis</name>
    <name type="common">Sahara scorpion</name>
    <dbReference type="NCBI Taxonomy" id="6858"/>
    <lineage>
        <taxon>Eukaryota</taxon>
        <taxon>Metazoa</taxon>
        <taxon>Ecdysozoa</taxon>
        <taxon>Arthropoda</taxon>
        <taxon>Chelicerata</taxon>
        <taxon>Arachnida</taxon>
        <taxon>Scorpiones</taxon>
        <taxon>Buthida</taxon>
        <taxon>Buthoidea</taxon>
        <taxon>Buthidae</taxon>
        <taxon>Androctonus</taxon>
    </lineage>
</organism>
<reference evidence="4 6" key="1">
    <citation type="journal article" date="2005" name="Biochem. Biophys. Res. Commun.">
        <title>New 'birtoxin analogs' from Androctonus australis venom.</title>
        <authorList>
            <person name="Martin-Eauclaire M.-F."/>
            <person name="Ceard B."/>
            <person name="Bosmans F."/>
            <person name="Rosso J.-P."/>
            <person name="Tytgat J."/>
            <person name="Bougis P.E."/>
        </authorList>
    </citation>
    <scope>NUCLEOTIDE SEQUENCE [MRNA]</scope>
    <scope>TISSUE SPECIFICITY</scope>
    <source>
        <tissue evidence="3">Venom gland</tissue>
    </source>
</reference>
<reference evidence="4" key="2">
    <citation type="journal article" date="2005" name="Biochem. J.">
        <title>A new type of scorpion Na+-channel-toxin-like polypeptide active on K+ channels.</title>
        <authorList>
            <person name="Srairi-Abid N."/>
            <person name="Guijarro J.I."/>
            <person name="Benkhalifa R."/>
            <person name="Mantegazza M."/>
            <person name="Cheikh A."/>
            <person name="Ben-Aissa M."/>
            <person name="Haumont P.-Y."/>
            <person name="Delepierre M."/>
            <person name="El Ayeb M."/>
        </authorList>
    </citation>
    <scope>PROTEIN SEQUENCE OF 23-80</scope>
    <scope>FUNCTION</scope>
    <scope>SUBCELLULAR LOCATION</scope>
    <scope>TISSUE SPECIFICITY</scope>
    <scope>MASS SPECTROMETRY</scope>
    <source>
        <tissue evidence="2">Venom</tissue>
    </source>
</reference>
<evidence type="ECO:0000255" key="1">
    <source>
        <dbReference type="PROSITE-ProRule" id="PRU01210"/>
    </source>
</evidence>
<evidence type="ECO:0000269" key="2">
    <source>
    </source>
</evidence>
<evidence type="ECO:0000269" key="3">
    <source>
    </source>
</evidence>
<evidence type="ECO:0000305" key="4"/>
<evidence type="ECO:0000305" key="5">
    <source>
    </source>
</evidence>
<evidence type="ECO:0000312" key="6">
    <source>
        <dbReference type="EMBL" id="CAH03778.1"/>
    </source>
</evidence>
<comment type="function">
    <text evidence="2">Inhibits the vertebrate potassium channels Kv1.1/KCNA1 and Kv1.3/KCNA3 in vitro with an IC(50) of 5.3 nM and 50.0 nM respectively.</text>
</comment>
<comment type="subcellular location">
    <subcellularLocation>
        <location evidence="2">Secreted</location>
    </subcellularLocation>
</comment>
<comment type="tissue specificity">
    <text evidence="2 3">Expressed by the venom gland.</text>
</comment>
<comment type="domain">
    <text evidence="4">Has the structural arrangement of an alpha-helix connected to antiparallel beta-sheets by disulfide bonds (CS-alpha/beta).</text>
</comment>
<comment type="mass spectrometry"/>
<comment type="miscellaneous">
    <text evidence="5">Negative results: is a weak beta toxin because it has no effect on Nav1.2a/SCN2A voltage-dependent sodium channels when perfused at a concentration of 100 nM, but when added to the extracellular bath solution at a concentration of 1 uM it shifts the voltage of activation toward more negative potentials. Has no effect on the Nav1.5/SCN5A voltage-dependent sodium channel. Administration to mice produces no toxic effects (PubMed:15656785).</text>
</comment>
<comment type="similarity">
    <text evidence="4">Belongs to the long (3 C-C) scorpion toxin superfamily. Sodium/Potassium channel inhibitor family.</text>
</comment>